<name>ARSC2_STAHJ</name>
<organism>
    <name type="scientific">Staphylococcus haemolyticus (strain JCSC1435)</name>
    <dbReference type="NCBI Taxonomy" id="279808"/>
    <lineage>
        <taxon>Bacteria</taxon>
        <taxon>Bacillati</taxon>
        <taxon>Bacillota</taxon>
        <taxon>Bacilli</taxon>
        <taxon>Bacillales</taxon>
        <taxon>Staphylococcaceae</taxon>
        <taxon>Staphylococcus</taxon>
    </lineage>
</organism>
<reference key="1">
    <citation type="journal article" date="2005" name="J. Bacteriol.">
        <title>Whole-genome sequencing of Staphylococcus haemolyticus uncovers the extreme plasticity of its genome and the evolution of human-colonizing staphylococcal species.</title>
        <authorList>
            <person name="Takeuchi F."/>
            <person name="Watanabe S."/>
            <person name="Baba T."/>
            <person name="Yuzawa H."/>
            <person name="Ito T."/>
            <person name="Morimoto Y."/>
            <person name="Kuroda M."/>
            <person name="Cui L."/>
            <person name="Takahashi M."/>
            <person name="Ankai A."/>
            <person name="Baba S."/>
            <person name="Fukui S."/>
            <person name="Lee J.C."/>
            <person name="Hiramatsu K."/>
        </authorList>
    </citation>
    <scope>NUCLEOTIDE SEQUENCE [LARGE SCALE GENOMIC DNA]</scope>
    <source>
        <strain>JCSC1435</strain>
    </source>
</reference>
<accession>Q4LAA8</accession>
<feature type="chain" id="PRO_0000162531" description="Arsenate reductase 2">
    <location>
        <begin position="1"/>
        <end position="131"/>
    </location>
</feature>
<feature type="active site" description="Nucleophile" evidence="1">
    <location>
        <position position="10"/>
    </location>
</feature>
<feature type="active site" description="Nucleophile" evidence="1">
    <location>
        <position position="82"/>
    </location>
</feature>
<feature type="active site" description="Nucleophile" evidence="1">
    <location>
        <position position="89"/>
    </location>
</feature>
<feature type="disulfide bond" description="Redox-active; alternate" evidence="1">
    <location>
        <begin position="10"/>
        <end position="82"/>
    </location>
</feature>
<feature type="disulfide bond" description="Redox-active; alternate" evidence="1">
    <location>
        <begin position="82"/>
        <end position="89"/>
    </location>
</feature>
<evidence type="ECO:0000255" key="1">
    <source>
        <dbReference type="HAMAP-Rule" id="MF_01624"/>
    </source>
</evidence>
<sequence length="131" mass="14683">MDKKTIYFICTGNSCRSQMAEGWGKKILGDEWQVYSGGIEAHGVNPKAIEAMKEVGIDISNHTSNLIDKNILNQSDLVVTLCSDADNNCPILPPNVKKEHWGFDDPAGKPWSEFQRVRDEIKTAIESFKTR</sequence>
<comment type="function">
    <text evidence="1">Catalyzes the reduction of arsenate [As(V)] to arsenite [As(III)].</text>
</comment>
<comment type="catalytic activity">
    <reaction evidence="1">
        <text>arsenate + [thioredoxin]-dithiol + H(+) = arsenite + [thioredoxin]-disulfide + H2O</text>
        <dbReference type="Rhea" id="RHEA:43848"/>
        <dbReference type="Rhea" id="RHEA-COMP:10698"/>
        <dbReference type="Rhea" id="RHEA-COMP:10700"/>
        <dbReference type="ChEBI" id="CHEBI:15377"/>
        <dbReference type="ChEBI" id="CHEBI:15378"/>
        <dbReference type="ChEBI" id="CHEBI:29242"/>
        <dbReference type="ChEBI" id="CHEBI:29950"/>
        <dbReference type="ChEBI" id="CHEBI:48597"/>
        <dbReference type="ChEBI" id="CHEBI:50058"/>
        <dbReference type="EC" id="1.20.4.4"/>
    </reaction>
</comment>
<comment type="subcellular location">
    <subcellularLocation>
        <location evidence="1">Cytoplasm</location>
    </subcellularLocation>
</comment>
<comment type="similarity">
    <text evidence="1">Belongs to the low molecular weight phosphotyrosine protein phosphatase family. Thioredoxin-coupled ArsC subfamily.</text>
</comment>
<dbReference type="EC" id="1.20.4.4" evidence="1"/>
<dbReference type="EMBL" id="AP006716">
    <property type="protein sequence ID" value="BAE03417.1"/>
    <property type="molecule type" value="Genomic_DNA"/>
</dbReference>
<dbReference type="SMR" id="Q4LAA8"/>
<dbReference type="KEGG" id="sha:SH0108"/>
<dbReference type="eggNOG" id="COG0394">
    <property type="taxonomic scope" value="Bacteria"/>
</dbReference>
<dbReference type="HOGENOM" id="CLU_071415_3_2_9"/>
<dbReference type="OrthoDB" id="9784339at2"/>
<dbReference type="Proteomes" id="UP000000543">
    <property type="component" value="Chromosome"/>
</dbReference>
<dbReference type="GO" id="GO:0005737">
    <property type="term" value="C:cytoplasm"/>
    <property type="evidence" value="ECO:0007669"/>
    <property type="project" value="UniProtKB-SubCell"/>
</dbReference>
<dbReference type="GO" id="GO:0030612">
    <property type="term" value="F:arsenate reductase (thioredoxin) activity"/>
    <property type="evidence" value="ECO:0007669"/>
    <property type="project" value="UniProtKB-UniRule"/>
</dbReference>
<dbReference type="GO" id="GO:0004725">
    <property type="term" value="F:protein tyrosine phosphatase activity"/>
    <property type="evidence" value="ECO:0007669"/>
    <property type="project" value="InterPro"/>
</dbReference>
<dbReference type="GO" id="GO:0046685">
    <property type="term" value="P:response to arsenic-containing substance"/>
    <property type="evidence" value="ECO:0007669"/>
    <property type="project" value="UniProtKB-KW"/>
</dbReference>
<dbReference type="CDD" id="cd16345">
    <property type="entry name" value="LMWP_ArsC"/>
    <property type="match status" value="1"/>
</dbReference>
<dbReference type="FunFam" id="3.40.50.2300:FF:000237">
    <property type="entry name" value="Arsenate reductase"/>
    <property type="match status" value="1"/>
</dbReference>
<dbReference type="Gene3D" id="3.40.50.2300">
    <property type="match status" value="1"/>
</dbReference>
<dbReference type="HAMAP" id="MF_01624">
    <property type="entry name" value="Arsenate_reduct"/>
    <property type="match status" value="1"/>
</dbReference>
<dbReference type="InterPro" id="IPR014064">
    <property type="entry name" value="Arsenate_reductase_ArsC"/>
</dbReference>
<dbReference type="InterPro" id="IPR023485">
    <property type="entry name" value="Ptyr_pPase"/>
</dbReference>
<dbReference type="InterPro" id="IPR036196">
    <property type="entry name" value="Ptyr_pPase_sf"/>
</dbReference>
<dbReference type="NCBIfam" id="TIGR02691">
    <property type="entry name" value="arsC_pI258_fam"/>
    <property type="match status" value="1"/>
</dbReference>
<dbReference type="NCBIfam" id="NF010053">
    <property type="entry name" value="PRK13530.1"/>
    <property type="match status" value="1"/>
</dbReference>
<dbReference type="PANTHER" id="PTHR43428">
    <property type="entry name" value="ARSENATE REDUCTASE"/>
    <property type="match status" value="1"/>
</dbReference>
<dbReference type="PANTHER" id="PTHR43428:SF1">
    <property type="entry name" value="ARSENATE REDUCTASE"/>
    <property type="match status" value="1"/>
</dbReference>
<dbReference type="Pfam" id="PF01451">
    <property type="entry name" value="LMWPc"/>
    <property type="match status" value="1"/>
</dbReference>
<dbReference type="SMART" id="SM00226">
    <property type="entry name" value="LMWPc"/>
    <property type="match status" value="1"/>
</dbReference>
<dbReference type="SUPFAM" id="SSF52788">
    <property type="entry name" value="Phosphotyrosine protein phosphatases I"/>
    <property type="match status" value="1"/>
</dbReference>
<proteinExistence type="inferred from homology"/>
<protein>
    <recommendedName>
        <fullName evidence="1">Arsenate reductase 2</fullName>
        <ecNumber evidence="1">1.20.4.4</ecNumber>
    </recommendedName>
</protein>
<gene>
    <name evidence="1" type="primary">arsC2</name>
    <name type="ordered locus">SH0108</name>
</gene>
<keyword id="KW-0059">Arsenical resistance</keyword>
<keyword id="KW-0963">Cytoplasm</keyword>
<keyword id="KW-1015">Disulfide bond</keyword>
<keyword id="KW-0560">Oxidoreductase</keyword>
<keyword id="KW-0676">Redox-active center</keyword>